<dbReference type="EC" id="3.1.2.-" evidence="2"/>
<dbReference type="EC" id="3.5.1.-" evidence="2"/>
<dbReference type="EC" id="3.5.1.124" evidence="2"/>
<dbReference type="EMBL" id="AB073863">
    <property type="protein sequence ID" value="BAB71781.1"/>
    <property type="molecule type" value="mRNA"/>
</dbReference>
<dbReference type="BMRB" id="Q95LI9"/>
<dbReference type="SMR" id="Q95LI9"/>
<dbReference type="MEROPS" id="C56.971"/>
<dbReference type="GO" id="GO:0005737">
    <property type="term" value="C:cytoplasm"/>
    <property type="evidence" value="ECO:0000250"/>
    <property type="project" value="UniProtKB"/>
</dbReference>
<dbReference type="GO" id="GO:0005829">
    <property type="term" value="C:cytosol"/>
    <property type="evidence" value="ECO:0000250"/>
    <property type="project" value="UniProtKB"/>
</dbReference>
<dbReference type="GO" id="GO:0005783">
    <property type="term" value="C:endoplasmic reticulum"/>
    <property type="evidence" value="ECO:0007669"/>
    <property type="project" value="UniProtKB-SubCell"/>
</dbReference>
<dbReference type="GO" id="GO:0045121">
    <property type="term" value="C:membrane raft"/>
    <property type="evidence" value="ECO:0007669"/>
    <property type="project" value="UniProtKB-SubCell"/>
</dbReference>
<dbReference type="GO" id="GO:0005739">
    <property type="term" value="C:mitochondrion"/>
    <property type="evidence" value="ECO:0000250"/>
    <property type="project" value="UniProtKB"/>
</dbReference>
<dbReference type="GO" id="GO:0005634">
    <property type="term" value="C:nucleus"/>
    <property type="evidence" value="ECO:0000250"/>
    <property type="project" value="UniProtKB"/>
</dbReference>
<dbReference type="GO" id="GO:0005886">
    <property type="term" value="C:plasma membrane"/>
    <property type="evidence" value="ECO:0007669"/>
    <property type="project" value="UniProtKB-SubCell"/>
</dbReference>
<dbReference type="GO" id="GO:0005507">
    <property type="term" value="F:copper ion binding"/>
    <property type="evidence" value="ECO:0000250"/>
    <property type="project" value="UniProtKB"/>
</dbReference>
<dbReference type="GO" id="GO:1990422">
    <property type="term" value="F:glyoxalase (glycolic acid-forming) activity"/>
    <property type="evidence" value="ECO:0000250"/>
    <property type="project" value="UniProtKB"/>
</dbReference>
<dbReference type="GO" id="GO:0045340">
    <property type="term" value="F:mercury ion binding"/>
    <property type="evidence" value="ECO:0000250"/>
    <property type="project" value="UniProtKB"/>
</dbReference>
<dbReference type="GO" id="GO:0003729">
    <property type="term" value="F:mRNA binding"/>
    <property type="evidence" value="ECO:0000250"/>
    <property type="project" value="UniProtKB"/>
</dbReference>
<dbReference type="GO" id="GO:0016684">
    <property type="term" value="F:oxidoreductase activity, acting on peroxide as acceptor"/>
    <property type="evidence" value="ECO:0007669"/>
    <property type="project" value="TreeGrafter"/>
</dbReference>
<dbReference type="GO" id="GO:0008233">
    <property type="term" value="F:peptidase activity"/>
    <property type="evidence" value="ECO:0000250"/>
    <property type="project" value="UniProtKB"/>
</dbReference>
<dbReference type="GO" id="GO:0036524">
    <property type="term" value="F:protein deglycase activity"/>
    <property type="evidence" value="ECO:0000250"/>
    <property type="project" value="UniProtKB"/>
</dbReference>
<dbReference type="GO" id="GO:0042803">
    <property type="term" value="F:protein homodimerization activity"/>
    <property type="evidence" value="ECO:0000250"/>
    <property type="project" value="UniProtKB"/>
</dbReference>
<dbReference type="GO" id="GO:0006914">
    <property type="term" value="P:autophagy"/>
    <property type="evidence" value="ECO:0007669"/>
    <property type="project" value="UniProtKB-KW"/>
</dbReference>
<dbReference type="GO" id="GO:0110095">
    <property type="term" value="P:cellular detoxification of aldehyde"/>
    <property type="evidence" value="ECO:0000250"/>
    <property type="project" value="UniProtKB"/>
</dbReference>
<dbReference type="GO" id="GO:0140041">
    <property type="term" value="P:cellular detoxification of methylglyoxal"/>
    <property type="evidence" value="ECO:0000250"/>
    <property type="project" value="UniProtKB"/>
</dbReference>
<dbReference type="GO" id="GO:0034599">
    <property type="term" value="P:cellular response to oxidative stress"/>
    <property type="evidence" value="ECO:0000250"/>
    <property type="project" value="UniProtKB"/>
</dbReference>
<dbReference type="GO" id="GO:0010273">
    <property type="term" value="P:detoxification of copper ion"/>
    <property type="evidence" value="ECO:0000250"/>
    <property type="project" value="UniProtKB"/>
</dbReference>
<dbReference type="GO" id="GO:0061691">
    <property type="term" value="P:detoxification of hydrogen peroxide"/>
    <property type="evidence" value="ECO:0000250"/>
    <property type="project" value="UniProtKB"/>
</dbReference>
<dbReference type="GO" id="GO:0006281">
    <property type="term" value="P:DNA repair"/>
    <property type="evidence" value="ECO:0000250"/>
    <property type="project" value="UniProtKB"/>
</dbReference>
<dbReference type="GO" id="GO:0042593">
    <property type="term" value="P:glucose homeostasis"/>
    <property type="evidence" value="ECO:0000250"/>
    <property type="project" value="UniProtKB"/>
</dbReference>
<dbReference type="GO" id="GO:0106044">
    <property type="term" value="P:guanine deglycation"/>
    <property type="evidence" value="ECO:0000250"/>
    <property type="project" value="UniProtKB"/>
</dbReference>
<dbReference type="GO" id="GO:0106046">
    <property type="term" value="P:guanine deglycation, glyoxal removal"/>
    <property type="evidence" value="ECO:0000250"/>
    <property type="project" value="UniProtKB"/>
</dbReference>
<dbReference type="GO" id="GO:0106045">
    <property type="term" value="P:guanine deglycation, methylglyoxal removal"/>
    <property type="evidence" value="ECO:0000250"/>
    <property type="project" value="UniProtKB"/>
</dbReference>
<dbReference type="GO" id="GO:0006954">
    <property type="term" value="P:inflammatory response"/>
    <property type="evidence" value="ECO:0007669"/>
    <property type="project" value="UniProtKB-KW"/>
</dbReference>
<dbReference type="GO" id="GO:0030073">
    <property type="term" value="P:insulin secretion"/>
    <property type="evidence" value="ECO:0000250"/>
    <property type="project" value="UniProtKB"/>
</dbReference>
<dbReference type="GO" id="GO:0061727">
    <property type="term" value="P:methylglyoxal catabolic process to lactate"/>
    <property type="evidence" value="ECO:0000250"/>
    <property type="project" value="UniProtKB"/>
</dbReference>
<dbReference type="GO" id="GO:0007005">
    <property type="term" value="P:mitochondrion organization"/>
    <property type="evidence" value="ECO:0000250"/>
    <property type="project" value="UniProtKB"/>
</dbReference>
<dbReference type="GO" id="GO:1903427">
    <property type="term" value="P:negative regulation of reactive oxygen species biosynthetic process"/>
    <property type="evidence" value="ECO:0000250"/>
    <property type="project" value="UniProtKB"/>
</dbReference>
<dbReference type="GO" id="GO:0002866">
    <property type="term" value="P:positive regulation of acute inflammatory response to antigenic stimulus"/>
    <property type="evidence" value="ECO:0000250"/>
    <property type="project" value="UniProtKB"/>
</dbReference>
<dbReference type="GO" id="GO:0033864">
    <property type="term" value="P:positive regulation of NAD(P)H oxidase activity"/>
    <property type="evidence" value="ECO:0000250"/>
    <property type="project" value="UniProtKB"/>
</dbReference>
<dbReference type="GO" id="GO:2000277">
    <property type="term" value="P:positive regulation of oxidative phosphorylation uncoupler activity"/>
    <property type="evidence" value="ECO:0000250"/>
    <property type="project" value="UniProtKB"/>
</dbReference>
<dbReference type="GO" id="GO:0050821">
    <property type="term" value="P:protein stabilization"/>
    <property type="evidence" value="ECO:0000250"/>
    <property type="project" value="UniProtKB"/>
</dbReference>
<dbReference type="GO" id="GO:0006508">
    <property type="term" value="P:proteolysis"/>
    <property type="evidence" value="ECO:0007669"/>
    <property type="project" value="UniProtKB-KW"/>
</dbReference>
<dbReference type="GO" id="GO:0050727">
    <property type="term" value="P:regulation of inflammatory response"/>
    <property type="evidence" value="ECO:0000250"/>
    <property type="project" value="UniProtKB"/>
</dbReference>
<dbReference type="GO" id="GO:0043523">
    <property type="term" value="P:regulation of neuron apoptotic process"/>
    <property type="evidence" value="ECO:0000250"/>
    <property type="project" value="UniProtKB"/>
</dbReference>
<dbReference type="GO" id="GO:0006979">
    <property type="term" value="P:response to oxidative stress"/>
    <property type="evidence" value="ECO:0000250"/>
    <property type="project" value="UniProtKB"/>
</dbReference>
<dbReference type="GO" id="GO:0007338">
    <property type="term" value="P:single fertilization"/>
    <property type="evidence" value="ECO:0007669"/>
    <property type="project" value="UniProtKB-KW"/>
</dbReference>
<dbReference type="CDD" id="cd03135">
    <property type="entry name" value="GATase1_DJ-1"/>
    <property type="match status" value="1"/>
</dbReference>
<dbReference type="FunFam" id="3.40.50.880:FF:000057">
    <property type="entry name" value="Protein/nucleic acid deglycase DJ-1"/>
    <property type="match status" value="1"/>
</dbReference>
<dbReference type="Gene3D" id="3.40.50.880">
    <property type="match status" value="1"/>
</dbReference>
<dbReference type="InterPro" id="IPR029062">
    <property type="entry name" value="Class_I_gatase-like"/>
</dbReference>
<dbReference type="InterPro" id="IPR006287">
    <property type="entry name" value="DJ-1"/>
</dbReference>
<dbReference type="InterPro" id="IPR002818">
    <property type="entry name" value="DJ-1/PfpI"/>
</dbReference>
<dbReference type="InterPro" id="IPR050325">
    <property type="entry name" value="Prot/Nucl_acid_deglycase"/>
</dbReference>
<dbReference type="NCBIfam" id="TIGR01383">
    <property type="entry name" value="not_thiJ"/>
    <property type="match status" value="1"/>
</dbReference>
<dbReference type="PANTHER" id="PTHR48094:SF12">
    <property type="entry name" value="PARKINSON DISEASE PROTEIN 7 HOMOLOG"/>
    <property type="match status" value="1"/>
</dbReference>
<dbReference type="PANTHER" id="PTHR48094">
    <property type="entry name" value="PROTEIN/NUCLEIC ACID DEGLYCASE DJ-1-RELATED"/>
    <property type="match status" value="1"/>
</dbReference>
<dbReference type="Pfam" id="PF01965">
    <property type="entry name" value="DJ-1_PfpI"/>
    <property type="match status" value="1"/>
</dbReference>
<dbReference type="SUPFAM" id="SSF52317">
    <property type="entry name" value="Class I glutamine amidotransferase-like"/>
    <property type="match status" value="1"/>
</dbReference>
<comment type="function">
    <text evidence="2 3">Multifunctional protein with controversial molecular function which plays an important role in cell protection against oxidative stress and cell death acting as oxidative stress sensor and redox-sensitive chaperone and protease. It is involved in neuroprotective mechanisms like the stabilization of NFE2L2 and PINK1 proteins, male fertility as a positive regulator of androgen signaling pathway as well as cell growth and transformation through, for instance, the modulation of NF-kappa-B signaling pathway. Has been described as a protein and nucleotide deglycase that catalyzes the deglycation of the Maillard adducts formed between amino groups of proteins or nucleotides and reactive carbonyl groups of glyoxals. But this function is rebuted by other works. As a protein deglycase, repairs methylglyoxal- and glyoxal-glycated proteins, and releases repaired proteins and lactate or glycolate, respectively. Deglycates cysteine, arginine and lysine residues in proteins, and thus reactivates these proteins by reversing glycation by glyoxals. Acts on early glycation intermediates (hemithioacetals and aminocarbinols), preventing the formation of advanced glycation endproducts (AGE) that cause irreversible damage. Also functions as a nucleotide deglycase able to repair glycated guanine in the free nucleotide pool (GTP, GDP, GMP, dGTP) and in DNA and RNA. Is thus involved in a major nucleotide repair system named guanine glycation repair (GG repair), dedicated to reversing methylglyoxal and glyoxal damage via nucleotide sanitization and direct nucleic acid repair. Protects histones from adduction by methylglyoxal, controls the levels of methylglyoxal-derived argininine modifications on chromatin. Able to remove the glycations and restore histone 3, histone glycation disrupts both local and global chromatin architecture by altering histone-DNA interactions as well as histone acetylation and ubiquitination levels. Displays a very low glyoxalase activity that may reflect its deglycase activity. Eliminates hydrogen peroxide and protects cells against hydrogen peroxide-induced cell death. Required for correct mitochondrial morphology and function as well as for autophagy of dysfunctional mitochondria. Plays a role in regulating expression or stability of the mitochondrial uncoupling proteins SLC25A14 and SLC25A27 in dopaminergic neurons of the substantia nigra pars compacta and attenuates the oxidative stress induced by calcium entry into the neurons via L-type channels during pacemaking. Regulates astrocyte inflammatory responses, may modulate lipid rafts-dependent endocytosis in astrocytes and neuronal cells. In pancreatic islets, involved in the maintenance of mitochondrial reactive oxygen species (ROS) levels and glucose homeostasis in an age- and diet dependent manner. Protects pancreatic beta cells from cell death induced by inflammatory and cytotoxic setting. Binds to a number of mRNAs containing multiple copies of GG or CC motifs and partially inhibits their translation but dissociates following oxidative stress. Metal-binding protein able to bind copper as well as toxic mercury ions, enhances the cell protection mechanism against induced metal toxicity. In macrophages, interacts with the NADPH oxidase subunit NCF1 to direct NADPH oxidase-dependent ROS production, and protects against sepsis.</text>
</comment>
<comment type="catalytic activity">
    <reaction evidence="2">
        <text>N(omega)-(1-hydroxy-2-oxopropyl)-L-arginyl-[protein] + H2O = lactate + L-arginyl-[protein] + H(+)</text>
        <dbReference type="Rhea" id="RHEA:49548"/>
        <dbReference type="Rhea" id="RHEA-COMP:10532"/>
        <dbReference type="Rhea" id="RHEA-COMP:12428"/>
        <dbReference type="ChEBI" id="CHEBI:15377"/>
        <dbReference type="ChEBI" id="CHEBI:15378"/>
        <dbReference type="ChEBI" id="CHEBI:24996"/>
        <dbReference type="ChEBI" id="CHEBI:29965"/>
        <dbReference type="ChEBI" id="CHEBI:131708"/>
        <dbReference type="EC" id="3.5.1.124"/>
    </reaction>
</comment>
<comment type="catalytic activity">
    <reaction evidence="2">
        <text>N(6)-(1-hydroxy-2-oxopropyl)-L-lysyl-[protein] + H2O = lactate + L-lysyl-[protein] + H(+)</text>
        <dbReference type="Rhea" id="RHEA:49552"/>
        <dbReference type="Rhea" id="RHEA-COMP:9752"/>
        <dbReference type="Rhea" id="RHEA-COMP:12429"/>
        <dbReference type="ChEBI" id="CHEBI:15377"/>
        <dbReference type="ChEBI" id="CHEBI:15378"/>
        <dbReference type="ChEBI" id="CHEBI:24996"/>
        <dbReference type="ChEBI" id="CHEBI:29969"/>
        <dbReference type="ChEBI" id="CHEBI:131709"/>
        <dbReference type="EC" id="3.5.1.124"/>
    </reaction>
</comment>
<comment type="catalytic activity">
    <reaction evidence="2">
        <text>S-(1-hydroxy-2-oxopropyl)-L-cysteinyl-[protein] + H2O = lactate + L-cysteinyl-[protein] + H(+)</text>
        <dbReference type="Rhea" id="RHEA:49556"/>
        <dbReference type="Rhea" id="RHEA-COMP:10131"/>
        <dbReference type="Rhea" id="RHEA-COMP:12430"/>
        <dbReference type="ChEBI" id="CHEBI:15377"/>
        <dbReference type="ChEBI" id="CHEBI:15378"/>
        <dbReference type="ChEBI" id="CHEBI:24996"/>
        <dbReference type="ChEBI" id="CHEBI:29950"/>
        <dbReference type="ChEBI" id="CHEBI:131710"/>
        <dbReference type="EC" id="3.5.1.124"/>
    </reaction>
</comment>
<comment type="catalytic activity">
    <reaction evidence="2">
        <text>N(omega)-(1-hydroxy-2-oxoethyl)-L-arginyl-[protein] + H2O = L-arginyl-[protein] + glycolate + H(+)</text>
        <dbReference type="Rhea" id="RHEA:57188"/>
        <dbReference type="Rhea" id="RHEA-COMP:10532"/>
        <dbReference type="Rhea" id="RHEA-COMP:14844"/>
        <dbReference type="ChEBI" id="CHEBI:15377"/>
        <dbReference type="ChEBI" id="CHEBI:15378"/>
        <dbReference type="ChEBI" id="CHEBI:29805"/>
        <dbReference type="ChEBI" id="CHEBI:29965"/>
        <dbReference type="ChEBI" id="CHEBI:141553"/>
        <dbReference type="EC" id="3.5.1.124"/>
    </reaction>
</comment>
<comment type="catalytic activity">
    <reaction evidence="2">
        <text>N(6)-(1-hydroxy-2-oxoethyl)-L-lysyl-[protein] + H2O = glycolate + L-lysyl-[protein] + H(+)</text>
        <dbReference type="Rhea" id="RHEA:57192"/>
        <dbReference type="Rhea" id="RHEA-COMP:9752"/>
        <dbReference type="Rhea" id="RHEA-COMP:14845"/>
        <dbReference type="ChEBI" id="CHEBI:15377"/>
        <dbReference type="ChEBI" id="CHEBI:15378"/>
        <dbReference type="ChEBI" id="CHEBI:29805"/>
        <dbReference type="ChEBI" id="CHEBI:29969"/>
        <dbReference type="ChEBI" id="CHEBI:141554"/>
        <dbReference type="EC" id="3.5.1.124"/>
    </reaction>
</comment>
<comment type="catalytic activity">
    <reaction evidence="2">
        <text>S-(1-hydroxy-2-oxoethyl)-L-cysteinyl-[protein] + H2O = glycolate + L-cysteinyl-[protein] + H(+)</text>
        <dbReference type="Rhea" id="RHEA:57196"/>
        <dbReference type="Rhea" id="RHEA-COMP:10131"/>
        <dbReference type="Rhea" id="RHEA-COMP:14846"/>
        <dbReference type="ChEBI" id="CHEBI:15377"/>
        <dbReference type="ChEBI" id="CHEBI:15378"/>
        <dbReference type="ChEBI" id="CHEBI:29805"/>
        <dbReference type="ChEBI" id="CHEBI:29950"/>
        <dbReference type="ChEBI" id="CHEBI:141555"/>
        <dbReference type="EC" id="3.5.1.124"/>
    </reaction>
</comment>
<comment type="catalytic activity">
    <reaction evidence="2">
        <text>N(2)-(1-hydroxy-2-oxopropyl)-dGTP + H2O = lactate + dGTP + H(+)</text>
        <dbReference type="Rhea" id="RHEA:57244"/>
        <dbReference type="ChEBI" id="CHEBI:15377"/>
        <dbReference type="ChEBI" id="CHEBI:15378"/>
        <dbReference type="ChEBI" id="CHEBI:24996"/>
        <dbReference type="ChEBI" id="CHEBI:61429"/>
        <dbReference type="ChEBI" id="CHEBI:141569"/>
    </reaction>
</comment>
<comment type="catalytic activity">
    <reaction evidence="2">
        <text>N(2)-(1-hydroxy-2-oxopropyl)-GTP + H2O = lactate + GTP + H(+)</text>
        <dbReference type="Rhea" id="RHEA:57256"/>
        <dbReference type="ChEBI" id="CHEBI:15377"/>
        <dbReference type="ChEBI" id="CHEBI:15378"/>
        <dbReference type="ChEBI" id="CHEBI:24996"/>
        <dbReference type="ChEBI" id="CHEBI:37565"/>
        <dbReference type="ChEBI" id="CHEBI:141570"/>
    </reaction>
</comment>
<comment type="catalytic activity">
    <reaction evidence="2">
        <text>N(2)-(1-hydroxy-2-oxopropyl)-GDP + H2O = lactate + GDP + H(+)</text>
        <dbReference type="Rhea" id="RHEA:57260"/>
        <dbReference type="ChEBI" id="CHEBI:15377"/>
        <dbReference type="ChEBI" id="CHEBI:15378"/>
        <dbReference type="ChEBI" id="CHEBI:24996"/>
        <dbReference type="ChEBI" id="CHEBI:58189"/>
        <dbReference type="ChEBI" id="CHEBI:141573"/>
    </reaction>
</comment>
<comment type="catalytic activity">
    <reaction evidence="2">
        <text>N(2)-(1-hydroxy-2-oxopropyl)-GMP + H2O = lactate + GMP + H(+)</text>
        <dbReference type="Rhea" id="RHEA:57268"/>
        <dbReference type="ChEBI" id="CHEBI:15377"/>
        <dbReference type="ChEBI" id="CHEBI:15378"/>
        <dbReference type="ChEBI" id="CHEBI:24996"/>
        <dbReference type="ChEBI" id="CHEBI:58115"/>
        <dbReference type="ChEBI" id="CHEBI:141575"/>
    </reaction>
</comment>
<comment type="catalytic activity">
    <reaction evidence="2">
        <text>N(2)-(1-hydroxy-2-oxoethyl)-dGTP + H2O = dGTP + glycolate + H(+)</text>
        <dbReference type="Rhea" id="RHEA:57248"/>
        <dbReference type="ChEBI" id="CHEBI:15377"/>
        <dbReference type="ChEBI" id="CHEBI:15378"/>
        <dbReference type="ChEBI" id="CHEBI:29805"/>
        <dbReference type="ChEBI" id="CHEBI:61429"/>
        <dbReference type="ChEBI" id="CHEBI:141572"/>
    </reaction>
</comment>
<comment type="catalytic activity">
    <reaction evidence="2">
        <text>N(2)-(1-hydroxy-2-oxoethyl)-GTP + H2O = glycolate + GTP + H(+)</text>
        <dbReference type="Rhea" id="RHEA:57252"/>
        <dbReference type="ChEBI" id="CHEBI:15377"/>
        <dbReference type="ChEBI" id="CHEBI:15378"/>
        <dbReference type="ChEBI" id="CHEBI:29805"/>
        <dbReference type="ChEBI" id="CHEBI:37565"/>
        <dbReference type="ChEBI" id="CHEBI:141571"/>
    </reaction>
</comment>
<comment type="catalytic activity">
    <reaction evidence="2">
        <text>N(2)-(1-hydroxy-2-oxoethyl)-GDP + H2O = glycolate + GDP + H(+)</text>
        <dbReference type="Rhea" id="RHEA:57264"/>
        <dbReference type="ChEBI" id="CHEBI:15377"/>
        <dbReference type="ChEBI" id="CHEBI:15378"/>
        <dbReference type="ChEBI" id="CHEBI:29805"/>
        <dbReference type="ChEBI" id="CHEBI:58189"/>
        <dbReference type="ChEBI" id="CHEBI:141574"/>
    </reaction>
</comment>
<comment type="catalytic activity">
    <reaction evidence="2">
        <text>N(2)-(1-hydroxy-2-oxoethyl)-GMP + H2O = glycolate + GMP + H(+)</text>
        <dbReference type="Rhea" id="RHEA:57304"/>
        <dbReference type="ChEBI" id="CHEBI:15377"/>
        <dbReference type="ChEBI" id="CHEBI:15378"/>
        <dbReference type="ChEBI" id="CHEBI:29805"/>
        <dbReference type="ChEBI" id="CHEBI:58115"/>
        <dbReference type="ChEBI" id="CHEBI:141576"/>
    </reaction>
</comment>
<comment type="catalytic activity">
    <reaction evidence="2">
        <text>an N(2)-(1-hydroxy-2-oxopropyl)-guanosine in RNA + H2O = a guanosine in RNA + lactate + H(+)</text>
        <dbReference type="Rhea" id="RHEA:57288"/>
        <dbReference type="Rhea" id="RHEA-COMP:14855"/>
        <dbReference type="Rhea" id="RHEA-COMP:14858"/>
        <dbReference type="ChEBI" id="CHEBI:15377"/>
        <dbReference type="ChEBI" id="CHEBI:15378"/>
        <dbReference type="ChEBI" id="CHEBI:24996"/>
        <dbReference type="ChEBI" id="CHEBI:74269"/>
        <dbReference type="ChEBI" id="CHEBI:141580"/>
    </reaction>
</comment>
<comment type="catalytic activity">
    <reaction evidence="2">
        <text>an N(2)-(1-hydroxy-2-oxopropyl)-2'-deoxyguanosine in DNA + H2O = a 2'-deoxyguanosine in DNA + lactate + H(+)</text>
        <dbReference type="Rhea" id="RHEA:57300"/>
        <dbReference type="Rhea" id="RHEA-COMP:11367"/>
        <dbReference type="Rhea" id="RHEA-COMP:14856"/>
        <dbReference type="ChEBI" id="CHEBI:15377"/>
        <dbReference type="ChEBI" id="CHEBI:15378"/>
        <dbReference type="ChEBI" id="CHEBI:24996"/>
        <dbReference type="ChEBI" id="CHEBI:85445"/>
        <dbReference type="ChEBI" id="CHEBI:141578"/>
    </reaction>
</comment>
<comment type="catalytic activity">
    <reaction evidence="2">
        <text>an N(2)-(1-hydroxy-2-oxoethyl)-guanosine in RNA + H2O = a guanosine in RNA + glycolate + H(+)</text>
        <dbReference type="Rhea" id="RHEA:57292"/>
        <dbReference type="Rhea" id="RHEA-COMP:14855"/>
        <dbReference type="Rhea" id="RHEA-COMP:14859"/>
        <dbReference type="ChEBI" id="CHEBI:15377"/>
        <dbReference type="ChEBI" id="CHEBI:15378"/>
        <dbReference type="ChEBI" id="CHEBI:29805"/>
        <dbReference type="ChEBI" id="CHEBI:74269"/>
        <dbReference type="ChEBI" id="CHEBI:141581"/>
    </reaction>
</comment>
<comment type="catalytic activity">
    <reaction evidence="2">
        <text>an N(2)-(1-hydroxy-2-oxoethyl)-2'-deoxyguanosine in DNA + H2O = a 2'-deoxyguanosine in DNA + glycolate + H(+)</text>
        <dbReference type="Rhea" id="RHEA:57296"/>
        <dbReference type="Rhea" id="RHEA-COMP:11367"/>
        <dbReference type="Rhea" id="RHEA-COMP:14857"/>
        <dbReference type="ChEBI" id="CHEBI:15377"/>
        <dbReference type="ChEBI" id="CHEBI:15378"/>
        <dbReference type="ChEBI" id="CHEBI:29805"/>
        <dbReference type="ChEBI" id="CHEBI:85445"/>
        <dbReference type="ChEBI" id="CHEBI:141579"/>
    </reaction>
</comment>
<comment type="cofactor">
    <text evidence="2">Deglycase activity does not require glutathione as a cofactor, however, glycated glutathione constitutes a PARK7 substrate.</text>
</comment>
<comment type="subunit">
    <text evidence="2 3">Homodimer. Binds EFCAB6/DJBP and PIAS2. Part of a ternary complex containing PARK7, EFCAB6/DJBP and AR. Interacts (via N-terminus) with OTUD7B. Interacts with BBS1, HIPK1, CLCF1 and MTERF. Forms a complex with PINK1 and PRKN (By similarity). Interacts (via C-terminus) with NCF1; the interaction is enhanced by LPS and modulates NCF1 phosphorylation and membrane translocation (By similarity). Interacts with NENF (By similarity).</text>
</comment>
<comment type="subcellular location">
    <subcellularLocation>
        <location evidence="1">Cell membrane</location>
        <topology evidence="1">Lipid-anchor</topology>
    </subcellularLocation>
    <subcellularLocation>
        <location evidence="2">Cytoplasm</location>
    </subcellularLocation>
    <subcellularLocation>
        <location evidence="2">Nucleus</location>
    </subcellularLocation>
    <subcellularLocation>
        <location evidence="1">Membrane raft</location>
    </subcellularLocation>
    <subcellularLocation>
        <location evidence="2">Mitochondrion</location>
    </subcellularLocation>
    <subcellularLocation>
        <location evidence="2">Endoplasmic reticulum</location>
    </subcellularLocation>
    <text evidence="2">Under normal conditions, located predominantly in the cytoplasm and, to a lesser extent, in the nucleus and mitochondrion. Translocates to the mitochondrion and subsequently to the nucleus in response to oxidative stress and exerts an increased cytoprotective effect against oxidative damage. Membrane raft localization in astrocytes and neuronal cells requires palmitoylation.</text>
</comment>
<comment type="PTM">
    <text evidence="2">Sumoylated on Lys-130 by PIAS2 or PIAS4; which is essential for cell-growth promoting activity and transforming activity.</text>
</comment>
<comment type="PTM">
    <text evidence="2">Undergoes cleavage of a C-terminal peptide and subsequent activation of protease activity in response to oxidative stress.</text>
</comment>
<comment type="similarity">
    <text evidence="4">Belongs to the peptidase C56 family.</text>
</comment>
<comment type="caution">
    <text evidence="2">Glyoxalase activity has been reported. It may however reflect its deglycase activity.</text>
</comment>
<comment type="caution">
    <text evidence="2">The protein deglycation activity is controversial. It has been ascribed to a TRIS buffer artifact by a publication and as a result of the removal of methylglyoxal by glyoxalase activity that leads to a subsequent decomposition of hemithioacetals and hemianimals due to the shift in equilibrium position by another one. However, biochemical experiments showing that PARK7 is a bona fide deglycase have been performed.</text>
</comment>
<sequence>MASKRALVILAKGAEEMETVIPVDVMRRAGIKVTIAGLAGKDPVQCSRDVVICPDASLEDAKKEGPYDVVVLPGGNLGAQNLSESAAVKEILKEQENRKGLIAAICAGPTALLAHEIGFGSKVTTHPLAKDKMMNGGHYTYSENRVEKDGLILTSRGPGTSFEFALAIVEALNGKEVAAQVKAPLVLKD</sequence>
<protein>
    <recommendedName>
        <fullName evidence="4">Parkinson disease protein 7 homolog</fullName>
    </recommendedName>
    <alternativeName>
        <fullName evidence="2">Maillard deglycase</fullName>
    </alternativeName>
    <alternativeName>
        <fullName evidence="2">Parkinsonism-associated deglycase</fullName>
    </alternativeName>
    <alternativeName>
        <fullName evidence="2">Protein DJ-1</fullName>
        <shortName>DJ-1</shortName>
    </alternativeName>
    <alternativeName>
        <fullName evidence="2">Protein/nucleic acid deglycase DJ-1</fullName>
        <ecNumber evidence="2">3.1.2.-</ecNumber>
        <ecNumber evidence="2">3.5.1.-</ecNumber>
        <ecNumber evidence="2">3.5.1.124</ecNumber>
    </alternativeName>
</protein>
<keyword id="KW-0007">Acetylation</keyword>
<keyword id="KW-0072">Autophagy</keyword>
<keyword id="KW-1003">Cell membrane</keyword>
<keyword id="KW-0143">Chaperone</keyword>
<keyword id="KW-0186">Copper</keyword>
<keyword id="KW-0963">Cytoplasm</keyword>
<keyword id="KW-0256">Endoplasmic reticulum</keyword>
<keyword id="KW-0278">Fertilization</keyword>
<keyword id="KW-0378">Hydrolase</keyword>
<keyword id="KW-0395">Inflammatory response</keyword>
<keyword id="KW-1017">Isopeptide bond</keyword>
<keyword id="KW-0449">Lipoprotein</keyword>
<keyword id="KW-0472">Membrane</keyword>
<keyword id="KW-0496">Mitochondrion</keyword>
<keyword id="KW-0539">Nucleus</keyword>
<keyword id="KW-0558">Oxidation</keyword>
<keyword id="KW-0564">Palmitate</keyword>
<keyword id="KW-0597">Phosphoprotein</keyword>
<keyword id="KW-0645">Protease</keyword>
<keyword id="KW-0694">RNA-binding</keyword>
<keyword id="KW-0346">Stress response</keyword>
<keyword id="KW-0043">Tumor suppressor</keyword>
<keyword id="KW-0832">Ubl conjugation</keyword>
<keyword id="KW-0865">Zymogen</keyword>
<evidence type="ECO:0000250" key="1">
    <source>
        <dbReference type="UniProtKB" id="O88767"/>
    </source>
</evidence>
<evidence type="ECO:0000250" key="2">
    <source>
        <dbReference type="UniProtKB" id="Q99497"/>
    </source>
</evidence>
<evidence type="ECO:0000250" key="3">
    <source>
        <dbReference type="UniProtKB" id="Q99LX0"/>
    </source>
</evidence>
<evidence type="ECO:0000305" key="4"/>
<organism>
    <name type="scientific">Chlorocebus aethiops</name>
    <name type="common">Green monkey</name>
    <name type="synonym">Cercopithecus aethiops</name>
    <dbReference type="NCBI Taxonomy" id="9534"/>
    <lineage>
        <taxon>Eukaryota</taxon>
        <taxon>Metazoa</taxon>
        <taxon>Chordata</taxon>
        <taxon>Craniata</taxon>
        <taxon>Vertebrata</taxon>
        <taxon>Euteleostomi</taxon>
        <taxon>Mammalia</taxon>
        <taxon>Eutheria</taxon>
        <taxon>Euarchontoglires</taxon>
        <taxon>Primates</taxon>
        <taxon>Haplorrhini</taxon>
        <taxon>Catarrhini</taxon>
        <taxon>Cercopithecidae</taxon>
        <taxon>Cercopithecinae</taxon>
        <taxon>Chlorocebus</taxon>
    </lineage>
</organism>
<name>PARK7_CHLAE</name>
<accession>Q95LI9</accession>
<feature type="initiator methionine" description="Removed" evidence="2">
    <location>
        <position position="1"/>
    </location>
</feature>
<feature type="chain" id="PRO_0000250480" description="Parkinson disease protein 7 homolog">
    <location>
        <begin position="2"/>
        <end status="unknown"/>
    </location>
</feature>
<feature type="propeptide" id="PRO_0000405557" description="Removed in mature form">
    <location>
        <begin status="unknown"/>
        <end position="189"/>
    </location>
</feature>
<feature type="active site" description="Nucleophile" evidence="2">
    <location>
        <position position="106"/>
    </location>
</feature>
<feature type="active site" evidence="2">
    <location>
        <position position="126"/>
    </location>
</feature>
<feature type="site" description="Cleavage; by CASP6" evidence="3">
    <location>
        <begin position="149"/>
        <end position="150"/>
    </location>
</feature>
<feature type="modified residue" description="N-acetylalanine" evidence="2">
    <location>
        <position position="2"/>
    </location>
</feature>
<feature type="modified residue" description="Phosphotyrosine" evidence="2">
    <location>
        <position position="67"/>
    </location>
</feature>
<feature type="modified residue" description="Cysteine sulfinic acid (-SO2H); alternate" evidence="2">
    <location>
        <position position="106"/>
    </location>
</feature>
<feature type="modified residue" description="N6-acetyllysine" evidence="3">
    <location>
        <position position="148"/>
    </location>
</feature>
<feature type="modified residue" description="N6-succinyllysine" evidence="3">
    <location>
        <position position="182"/>
    </location>
</feature>
<feature type="lipid moiety-binding region" description="S-palmitoyl cysteine" evidence="2">
    <location>
        <position position="46"/>
    </location>
</feature>
<feature type="lipid moiety-binding region" description="S-palmitoyl cysteine" evidence="2">
    <location>
        <position position="53"/>
    </location>
</feature>
<feature type="lipid moiety-binding region" description="S-palmitoyl cysteine; alternate" evidence="2">
    <location>
        <position position="106"/>
    </location>
</feature>
<feature type="cross-link" description="Glycyl lysine isopeptide (Lys-Gly) (interchain with G-Cter in SUMO)" evidence="2">
    <location>
        <position position="130"/>
    </location>
</feature>
<proteinExistence type="evidence at transcript level"/>
<reference key="1">
    <citation type="journal article" date="2006" name="Cell Death Differ.">
        <title>Proper SUMO-1 conjugation is essential to DJ-1 to exert its full activities.</title>
        <authorList>
            <person name="Shinbo Y."/>
            <person name="Niki T."/>
            <person name="Taira T."/>
            <person name="Ooe H."/>
            <person name="Takahashi-Niki K."/>
            <person name="Maita C."/>
            <person name="Seino C."/>
            <person name="Iguchi-Ariga S.M.M."/>
            <person name="Ariga H."/>
        </authorList>
    </citation>
    <scope>NUCLEOTIDE SEQUENCE [MRNA]</scope>
</reference>
<gene>
    <name evidence="2" type="primary">PARK7</name>
</gene>